<feature type="chain" id="PRO_0000388973" description="Murein tetrapeptide carboxypeptidase">
    <location>
        <begin position="1"/>
        <end position="307"/>
    </location>
</feature>
<feature type="active site" description="Nucleophile" evidence="2">
    <location>
        <position position="115"/>
    </location>
</feature>
<feature type="active site" description="Charge relay system" evidence="2">
    <location>
        <position position="217"/>
    </location>
</feature>
<feature type="active site" description="Charge relay system" evidence="2">
    <location>
        <position position="285"/>
    </location>
</feature>
<feature type="mutagenesis site" description="Loss of activity." evidence="2">
    <original>S</original>
    <variation>A</variation>
    <location>
        <position position="115"/>
    </location>
</feature>
<feature type="mutagenesis site" description="Loss of activity." evidence="2">
    <original>E</original>
    <variation>A</variation>
    <location>
        <position position="217"/>
    </location>
</feature>
<feature type="mutagenesis site" description="Loss of activity." evidence="2">
    <original>H</original>
    <variation>A</variation>
    <location>
        <position position="285"/>
    </location>
</feature>
<feature type="strand" evidence="5">
    <location>
        <begin position="16"/>
        <end position="21"/>
    </location>
</feature>
<feature type="strand" evidence="6">
    <location>
        <begin position="23"/>
        <end position="25"/>
    </location>
</feature>
<feature type="helix" evidence="5">
    <location>
        <begin position="29"/>
        <end position="41"/>
    </location>
</feature>
<feature type="strand" evidence="5">
    <location>
        <begin position="46"/>
        <end position="48"/>
    </location>
</feature>
<feature type="turn" evidence="5">
    <location>
        <begin position="50"/>
        <end position="53"/>
    </location>
</feature>
<feature type="strand" evidence="5">
    <location>
        <begin position="59"/>
        <end position="61"/>
    </location>
</feature>
<feature type="helix" evidence="5">
    <location>
        <begin position="63"/>
        <end position="75"/>
    </location>
</feature>
<feature type="strand" evidence="5">
    <location>
        <begin position="79"/>
        <end position="85"/>
    </location>
</feature>
<feature type="helix" evidence="5">
    <location>
        <begin position="91"/>
        <end position="94"/>
    </location>
</feature>
<feature type="turn" evidence="5">
    <location>
        <begin position="95"/>
        <end position="97"/>
    </location>
</feature>
<feature type="helix" evidence="5">
    <location>
        <begin position="100"/>
        <end position="105"/>
    </location>
</feature>
<feature type="strand" evidence="5">
    <location>
        <begin position="111"/>
        <end position="113"/>
    </location>
</feature>
<feature type="helix" evidence="5">
    <location>
        <begin position="115"/>
        <end position="117"/>
    </location>
</feature>
<feature type="helix" evidence="5">
    <location>
        <begin position="118"/>
        <end position="126"/>
    </location>
</feature>
<feature type="strand" evidence="5">
    <location>
        <begin position="131"/>
        <end position="133"/>
    </location>
</feature>
<feature type="helix" evidence="5">
    <location>
        <begin position="137"/>
        <end position="141"/>
    </location>
</feature>
<feature type="helix" evidence="5">
    <location>
        <begin position="148"/>
        <end position="165"/>
    </location>
</feature>
<feature type="strand" evidence="5">
    <location>
        <begin position="171"/>
        <end position="173"/>
    </location>
</feature>
<feature type="strand" evidence="5">
    <location>
        <begin position="175"/>
        <end position="179"/>
    </location>
</feature>
<feature type="strand" evidence="5">
    <location>
        <begin position="184"/>
        <end position="192"/>
    </location>
</feature>
<feature type="helix" evidence="5">
    <location>
        <begin position="193"/>
        <end position="197"/>
    </location>
</feature>
<feature type="turn" evidence="5">
    <location>
        <begin position="198"/>
        <end position="201"/>
    </location>
</feature>
<feature type="strand" evidence="5">
    <location>
        <begin position="213"/>
        <end position="220"/>
    </location>
</feature>
<feature type="helix" evidence="5">
    <location>
        <begin position="223"/>
        <end position="236"/>
    </location>
</feature>
<feature type="helix" evidence="5">
    <location>
        <begin position="239"/>
        <end position="241"/>
    </location>
</feature>
<feature type="strand" evidence="5">
    <location>
        <begin position="243"/>
        <end position="251"/>
    </location>
</feature>
<feature type="helix" evidence="5">
    <location>
        <begin position="262"/>
        <end position="272"/>
    </location>
</feature>
<feature type="strand" evidence="5">
    <location>
        <begin position="277"/>
        <end position="279"/>
    </location>
</feature>
<feature type="strand" evidence="5">
    <location>
        <begin position="284"/>
        <end position="287"/>
    </location>
</feature>
<feature type="strand" evidence="5">
    <location>
        <begin position="292"/>
        <end position="294"/>
    </location>
</feature>
<feature type="strand" evidence="5">
    <location>
        <begin position="297"/>
        <end position="301"/>
    </location>
</feature>
<feature type="strand" evidence="5">
    <location>
        <begin position="304"/>
        <end position="307"/>
    </location>
</feature>
<comment type="function">
    <text>Releases the terminal D-alanine residue from the cytoplasmic disaccharide-tetrapeptide GlcNAc-MurNAc-L-Ala-gamma-D-Glu-meso-Dap-D-Ala, which is a murein turnover product. Probably also act on free tetrapetide. May be involved in murein recycling.</text>
</comment>
<comment type="catalytic activity">
    <reaction evidence="2">
        <text>N-acetyl-D-glucosaminyl-N-acetylmuramoyl-L-alanyl-meso-2,6-diaminoheptanedioyl-D-alanine + H2O = N-acetyl-D-glucosaminyl-N-acetylmuramoyl-L-alanyl-meso-2,6-diaminoheptanedioate + D-alanine</text>
        <dbReference type="Rhea" id="RHEA:48688"/>
        <dbReference type="ChEBI" id="CHEBI:15377"/>
        <dbReference type="ChEBI" id="CHEBI:57416"/>
        <dbReference type="ChEBI" id="CHEBI:233808"/>
        <dbReference type="ChEBI" id="CHEBI:233809"/>
        <dbReference type="EC" id="3.4.17.13"/>
    </reaction>
</comment>
<comment type="pathway">
    <text>Cell wall biogenesis; peptidoglycan recycling.</text>
</comment>
<comment type="subunit">
    <text evidence="4">Homodimer.</text>
</comment>
<comment type="subcellular location">
    <subcellularLocation>
        <location evidence="1">Cytoplasm</location>
    </subcellularLocation>
</comment>
<comment type="similarity">
    <text evidence="3">Belongs to the peptidase S66 family.</text>
</comment>
<organism>
    <name type="scientific">Pseudomonas aeruginosa (strain ATCC 15692 / DSM 22644 / CIP 104116 / JCM 14847 / LMG 12228 / 1C / PRS 101 / PAO1)</name>
    <dbReference type="NCBI Taxonomy" id="208964"/>
    <lineage>
        <taxon>Bacteria</taxon>
        <taxon>Pseudomonadati</taxon>
        <taxon>Pseudomonadota</taxon>
        <taxon>Gammaproteobacteria</taxon>
        <taxon>Pseudomonadales</taxon>
        <taxon>Pseudomonadaceae</taxon>
        <taxon>Pseudomonas</taxon>
    </lineage>
</organism>
<protein>
    <recommendedName>
        <fullName>Murein tetrapeptide carboxypeptidase</fullName>
        <ecNumber>3.4.17.13</ecNumber>
    </recommendedName>
    <alternativeName>
        <fullName>LD-carboxypeptidase</fullName>
    </alternativeName>
</protein>
<evidence type="ECO:0000250" key="1"/>
<evidence type="ECO:0000269" key="2">
    <source>
    </source>
</evidence>
<evidence type="ECO:0000305" key="3"/>
<evidence type="ECO:0000305" key="4">
    <source>
    </source>
</evidence>
<evidence type="ECO:0007829" key="5">
    <source>
        <dbReference type="PDB" id="1ZL0"/>
    </source>
</evidence>
<evidence type="ECO:0007829" key="6">
    <source>
        <dbReference type="PDB" id="1ZRS"/>
    </source>
</evidence>
<dbReference type="EC" id="3.4.17.13"/>
<dbReference type="EMBL" id="AE004091">
    <property type="protein sequence ID" value="AAG08583.1"/>
    <property type="molecule type" value="Genomic_DNA"/>
</dbReference>
<dbReference type="PIR" id="E82997">
    <property type="entry name" value="E82997"/>
</dbReference>
<dbReference type="RefSeq" id="NP_253885.1">
    <property type="nucleotide sequence ID" value="NC_002516.2"/>
</dbReference>
<dbReference type="RefSeq" id="WP_003100070.1">
    <property type="nucleotide sequence ID" value="NZ_QZGE01000002.1"/>
</dbReference>
<dbReference type="PDB" id="1ZL0">
    <property type="method" value="X-ray"/>
    <property type="resolution" value="1.10 A"/>
    <property type="chains" value="A/B=1-307"/>
</dbReference>
<dbReference type="PDB" id="1ZRS">
    <property type="method" value="X-ray"/>
    <property type="resolution" value="1.50 A"/>
    <property type="chains" value="A/B=1-307"/>
</dbReference>
<dbReference type="PDB" id="2AUM">
    <property type="method" value="X-ray"/>
    <property type="resolution" value="2.40 A"/>
    <property type="chains" value="A/B=1-307"/>
</dbReference>
<dbReference type="PDB" id="2AUN">
    <property type="method" value="X-ray"/>
    <property type="resolution" value="2.40 A"/>
    <property type="chains" value="A/B=1-307"/>
</dbReference>
<dbReference type="PDBsum" id="1ZL0"/>
<dbReference type="PDBsum" id="1ZRS"/>
<dbReference type="PDBsum" id="2AUM"/>
<dbReference type="PDBsum" id="2AUN"/>
<dbReference type="SMR" id="Q9HTZ1"/>
<dbReference type="FunCoup" id="Q9HTZ1">
    <property type="interactions" value="268"/>
</dbReference>
<dbReference type="STRING" id="208964.PA5198"/>
<dbReference type="MEROPS" id="S66.001"/>
<dbReference type="PaxDb" id="208964-PA5198"/>
<dbReference type="DNASU" id="880289"/>
<dbReference type="GeneID" id="880289"/>
<dbReference type="KEGG" id="pae:PA5198"/>
<dbReference type="PATRIC" id="fig|208964.12.peg.5448"/>
<dbReference type="PseudoCAP" id="PA5198"/>
<dbReference type="HOGENOM" id="CLU_034346_3_1_6"/>
<dbReference type="InParanoid" id="Q9HTZ1"/>
<dbReference type="OrthoDB" id="9807329at2"/>
<dbReference type="PhylomeDB" id="Q9HTZ1"/>
<dbReference type="BioCyc" id="MetaCyc:MONOMER-20218"/>
<dbReference type="BioCyc" id="PAER208964:G1FZ6-5317-MONOMER"/>
<dbReference type="BRENDA" id="3.4.17.13">
    <property type="organism ID" value="5087"/>
</dbReference>
<dbReference type="UniPathway" id="UPA00544"/>
<dbReference type="EvolutionaryTrace" id="Q9HTZ1"/>
<dbReference type="Proteomes" id="UP000002438">
    <property type="component" value="Chromosome"/>
</dbReference>
<dbReference type="GO" id="GO:0005829">
    <property type="term" value="C:cytosol"/>
    <property type="evidence" value="ECO:0000318"/>
    <property type="project" value="GO_Central"/>
</dbReference>
<dbReference type="GO" id="GO:0106415">
    <property type="term" value="F:muramoyltetrapeptide carboxypeptidase activity"/>
    <property type="evidence" value="ECO:0000318"/>
    <property type="project" value="GO_Central"/>
</dbReference>
<dbReference type="GO" id="GO:0008236">
    <property type="term" value="F:serine-type peptidase activity"/>
    <property type="evidence" value="ECO:0007669"/>
    <property type="project" value="UniProtKB-KW"/>
</dbReference>
<dbReference type="GO" id="GO:0071555">
    <property type="term" value="P:cell wall organization"/>
    <property type="evidence" value="ECO:0007669"/>
    <property type="project" value="UniProtKB-KW"/>
</dbReference>
<dbReference type="GO" id="GO:0009252">
    <property type="term" value="P:peptidoglycan biosynthetic process"/>
    <property type="evidence" value="ECO:0007669"/>
    <property type="project" value="UniProtKB-KW"/>
</dbReference>
<dbReference type="GO" id="GO:0009254">
    <property type="term" value="P:peptidoglycan turnover"/>
    <property type="evidence" value="ECO:0000318"/>
    <property type="project" value="GO_Central"/>
</dbReference>
<dbReference type="GO" id="GO:0006508">
    <property type="term" value="P:proteolysis"/>
    <property type="evidence" value="ECO:0007669"/>
    <property type="project" value="UniProtKB-KW"/>
</dbReference>
<dbReference type="GO" id="GO:0008360">
    <property type="term" value="P:regulation of cell shape"/>
    <property type="evidence" value="ECO:0007669"/>
    <property type="project" value="UniProtKB-KW"/>
</dbReference>
<dbReference type="CDD" id="cd07025">
    <property type="entry name" value="Peptidase_S66"/>
    <property type="match status" value="1"/>
</dbReference>
<dbReference type="Gene3D" id="3.40.50.10740">
    <property type="entry name" value="Class I glutamine amidotransferase-like"/>
    <property type="match status" value="1"/>
</dbReference>
<dbReference type="Gene3D" id="3.50.30.60">
    <property type="entry name" value="LD-carboxypeptidase A C-terminal domain-like"/>
    <property type="match status" value="1"/>
</dbReference>
<dbReference type="InterPro" id="IPR027461">
    <property type="entry name" value="Carboxypeptidase_A_C_sf"/>
</dbReference>
<dbReference type="InterPro" id="IPR029062">
    <property type="entry name" value="Class_I_gatase-like"/>
</dbReference>
<dbReference type="InterPro" id="IPR027478">
    <property type="entry name" value="LdcA_N"/>
</dbReference>
<dbReference type="InterPro" id="IPR040449">
    <property type="entry name" value="Peptidase_S66_N"/>
</dbReference>
<dbReference type="InterPro" id="IPR040921">
    <property type="entry name" value="Peptidase_S66C"/>
</dbReference>
<dbReference type="InterPro" id="IPR003507">
    <property type="entry name" value="S66_fam"/>
</dbReference>
<dbReference type="PANTHER" id="PTHR30237">
    <property type="entry name" value="MURAMOYLTETRAPEPTIDE CARBOXYPEPTIDASE"/>
    <property type="match status" value="1"/>
</dbReference>
<dbReference type="PANTHER" id="PTHR30237:SF2">
    <property type="entry name" value="MUREIN TETRAPEPTIDE CARBOXYPEPTIDASE"/>
    <property type="match status" value="1"/>
</dbReference>
<dbReference type="Pfam" id="PF02016">
    <property type="entry name" value="Peptidase_S66"/>
    <property type="match status" value="1"/>
</dbReference>
<dbReference type="Pfam" id="PF17676">
    <property type="entry name" value="Peptidase_S66C"/>
    <property type="match status" value="1"/>
</dbReference>
<dbReference type="PIRSF" id="PIRSF028757">
    <property type="entry name" value="LD-carboxypeptidase"/>
    <property type="match status" value="1"/>
</dbReference>
<dbReference type="SUPFAM" id="SSF52317">
    <property type="entry name" value="Class I glutamine amidotransferase-like"/>
    <property type="match status" value="1"/>
</dbReference>
<dbReference type="SUPFAM" id="SSF141986">
    <property type="entry name" value="LD-carboxypeptidase A C-terminal domain-like"/>
    <property type="match status" value="1"/>
</dbReference>
<sequence>MTSRPSSDQTWQPIDGRVALIAPASAIATDVLEATLRQLEVHGVDYHLGRHVEARYRYLAGTVEQRLEDLHNAFDMPDITAVWCLRGGYGCGQLLPGLDWGRLQAASPRPLIGFSDISVLLSAFHRHGLPAIHGPVATGLGLSPLSAPREQQERLASLASVSRLLAGIDHELPVQHLGGHKQRVEGALIGGNLTALACMAGTLGGLHAPAGSILVLEDVGEPYYRLERSLWQLLESIDARQLGAICLGSFTDCPRKEVAHSLERIFGEYAAAIEVPLYHHLPSGHGAQNRAWPYGKTAVLEGNRLRW</sequence>
<accession>Q9HTZ1</accession>
<proteinExistence type="evidence at protein level"/>
<keyword id="KW-0002">3D-structure</keyword>
<keyword id="KW-0121">Carboxypeptidase</keyword>
<keyword id="KW-0133">Cell shape</keyword>
<keyword id="KW-0961">Cell wall biogenesis/degradation</keyword>
<keyword id="KW-0963">Cytoplasm</keyword>
<keyword id="KW-0378">Hydrolase</keyword>
<keyword id="KW-0573">Peptidoglycan synthesis</keyword>
<keyword id="KW-0645">Protease</keyword>
<keyword id="KW-1185">Reference proteome</keyword>
<keyword id="KW-0720">Serine protease</keyword>
<name>LDC_PSEAE</name>
<gene>
    <name type="ordered locus">PA5198</name>
</gene>
<reference key="1">
    <citation type="journal article" date="2000" name="Nature">
        <title>Complete genome sequence of Pseudomonas aeruginosa PAO1, an opportunistic pathogen.</title>
        <authorList>
            <person name="Stover C.K."/>
            <person name="Pham X.-Q.T."/>
            <person name="Erwin A.L."/>
            <person name="Mizoguchi S.D."/>
            <person name="Warrener P."/>
            <person name="Hickey M.J."/>
            <person name="Brinkman F.S.L."/>
            <person name="Hufnagle W.O."/>
            <person name="Kowalik D.J."/>
            <person name="Lagrou M."/>
            <person name="Garber R.L."/>
            <person name="Goltry L."/>
            <person name="Tolentino E."/>
            <person name="Westbrock-Wadman S."/>
            <person name="Yuan Y."/>
            <person name="Brody L.L."/>
            <person name="Coulter S.N."/>
            <person name="Folger K.R."/>
            <person name="Kas A."/>
            <person name="Larbig K."/>
            <person name="Lim R.M."/>
            <person name="Smith K.A."/>
            <person name="Spencer D.H."/>
            <person name="Wong G.K.-S."/>
            <person name="Wu Z."/>
            <person name="Paulsen I.T."/>
            <person name="Reizer J."/>
            <person name="Saier M.H. Jr."/>
            <person name="Hancock R.E.W."/>
            <person name="Lory S."/>
            <person name="Olson M.V."/>
        </authorList>
    </citation>
    <scope>NUCLEOTIDE SEQUENCE [LARGE SCALE GENOMIC DNA]</scope>
    <source>
        <strain>ATCC 15692 / DSM 22644 / CIP 104116 / JCM 14847 / LMG 12228 / 1C / PRS 101 / PAO1</strain>
    </source>
</reference>
<reference key="2">
    <citation type="journal article" date="2005" name="J. Biol. Chem.">
        <title>Pseudomonas aeruginosa LD-carboxypeptidase, a serine peptidase with a Ser-His-Glu triad and a nucleophilic elbow.</title>
        <authorList>
            <person name="Korza H.J."/>
            <person name="Bochtler M."/>
        </authorList>
    </citation>
    <scope>X-RAY CRYSTALLOGRAPHY (1.5 ANGSTROMS) OF WILD-TYPE AND MUTANT ALA-115 AND ALA-285</scope>
    <scope>CATALYTIC ACTIVITY</scope>
    <scope>IDENTIFICATION AS A SERINE PEPTIDASE</scope>
    <scope>ACTIVE SITE</scope>
    <scope>SUBUNIT</scope>
    <scope>MUTAGENESIS OF SER-115; GLU-217 AND HIS-285</scope>
    <source>
        <strain>ATCC 15692 / DSM 22644 / CIP 104116 / JCM 14847 / LMG 12228 / 1C / PRS 101 / PAO1</strain>
    </source>
</reference>
<reference key="3">
    <citation type="submission" date="2009-02" db="PDB data bank">
        <title>X-ray crystal structure of hypothetical protein PA5198 at 1.1 A resolution.</title>
        <authorList>
            <consortium name="Midwest center for structural genomics (MCSG)"/>
        </authorList>
    </citation>
    <scope>X-RAY CRYSTALLOGRAPHY (1.1 ANGSTROMS)</scope>
</reference>